<gene>
    <name type="ordered locus">CT_392</name>
</gene>
<sequence>MSSIQGTSGSSPERLPNSREDEGMNPEGVTPSGQTISFSAVGKSTSAEDIQQLALPIIQSDAMASSPSVGGAVGEVEVAEIIADVMEKNDANVQKLDEDMEALLQAISSSEEQLESPGVRNKSALKGTNRSNSHREEIARNQRLRSLSVRHGLAYNRHSLRRLARGIRHHAGLVTASFATLHKTLRAVPQEDLKSILGKDSDTVLARLHKLGLEVNEKGEWRLRANGEVGSINQSICNLARSAERLHDDGPLSINDQASEEEVTACCSAGRRACQFLQEHLMGALRAIYYQILRFFHWISRRVEVEPEDTDYYMRPGIFINPYASYLSSSPSVEDPRSLRDRLRDGGALSGEDTLFSMPQDESLDSESVSDDDRGFQ</sequence>
<proteinExistence type="inferred from homology"/>
<accession>P36427</accession>
<accession>O84397</accession>
<comment type="similarity">
    <text evidence="2">Belongs to the chlamydial CPn_0499/CT_392/TC_0671 family.</text>
</comment>
<name>Y392_CHLTR</name>
<evidence type="ECO:0000256" key="1">
    <source>
        <dbReference type="SAM" id="MobiDB-lite"/>
    </source>
</evidence>
<evidence type="ECO:0000305" key="2"/>
<protein>
    <recommendedName>
        <fullName>Uncharacterized protein CT_392</fullName>
    </recommendedName>
    <alternativeName>
        <fullName>ORFB</fullName>
    </alternativeName>
</protein>
<organism>
    <name type="scientific">Chlamydia trachomatis serovar D (strain ATCC VR-885 / DSM 19411 / UW-3/Cx)</name>
    <dbReference type="NCBI Taxonomy" id="272561"/>
    <lineage>
        <taxon>Bacteria</taxon>
        <taxon>Pseudomonadati</taxon>
        <taxon>Chlamydiota</taxon>
        <taxon>Chlamydiia</taxon>
        <taxon>Chlamydiales</taxon>
        <taxon>Chlamydiaceae</taxon>
        <taxon>Chlamydia/Chlamydophila group</taxon>
        <taxon>Chlamydia</taxon>
    </lineage>
</organism>
<reference key="1">
    <citation type="journal article" date="1998" name="Science">
        <title>Genome sequence of an obligate intracellular pathogen of humans: Chlamydia trachomatis.</title>
        <authorList>
            <person name="Stephens R.S."/>
            <person name="Kalman S."/>
            <person name="Lammel C.J."/>
            <person name="Fan J."/>
            <person name="Marathe R."/>
            <person name="Aravind L."/>
            <person name="Mitchell W.P."/>
            <person name="Olinger L."/>
            <person name="Tatusov R.L."/>
            <person name="Zhao Q."/>
            <person name="Koonin E.V."/>
            <person name="Davis R.W."/>
        </authorList>
    </citation>
    <scope>NUCLEOTIDE SEQUENCE [LARGE SCALE GENOMIC DNA]</scope>
    <source>
        <strain>ATCC VR-885 / DSM 19411 / UW-3/Cx</strain>
    </source>
</reference>
<reference key="2">
    <citation type="journal article" date="1994" name="Gene">
        <title>Another putative heat-shock gene and aminoacyl-tRNA synthetase gene are located upstream from the grpE-like and dnaK-like genes in Chlamydia trachomatis.</title>
        <authorList>
            <person name="Schmiel D.H."/>
            <person name="Wyrick P.B."/>
        </authorList>
    </citation>
    <scope>NUCLEOTIDE SEQUENCE [GENOMIC DNA] OF 1-292</scope>
    <source>
        <strain>E/UW-5/Cx</strain>
    </source>
</reference>
<keyword id="KW-1185">Reference proteome</keyword>
<dbReference type="EMBL" id="AE001273">
    <property type="protein sequence ID" value="AAC67989.1"/>
    <property type="molecule type" value="Genomic_DNA"/>
</dbReference>
<dbReference type="EMBL" id="L25105">
    <property type="protein sequence ID" value="AAA23160.1"/>
    <property type="molecule type" value="Genomic_DNA"/>
</dbReference>
<dbReference type="PIR" id="F71520">
    <property type="entry name" value="F71520"/>
</dbReference>
<dbReference type="RefSeq" id="WP_009871744.1">
    <property type="nucleotide sequence ID" value="NC_000117.1"/>
</dbReference>
<dbReference type="SMR" id="P36427"/>
<dbReference type="EnsemblBacteria" id="AAC67989">
    <property type="protein sequence ID" value="AAC67989"/>
    <property type="gene ID" value="CT_392"/>
</dbReference>
<dbReference type="KEGG" id="ctr:CT_392"/>
<dbReference type="PATRIC" id="fig|272561.5.peg.422"/>
<dbReference type="HOGENOM" id="CLU_732986_0_0_0"/>
<dbReference type="InParanoid" id="P36427"/>
<dbReference type="OrthoDB" id="19192at2"/>
<dbReference type="Proteomes" id="UP000000431">
    <property type="component" value="Chromosome"/>
</dbReference>
<dbReference type="NCBIfam" id="NF047362">
    <property type="entry name" value="CT392_fam"/>
    <property type="match status" value="1"/>
</dbReference>
<feature type="chain" id="PRO_0000218391" description="Uncharacterized protein CT_392">
    <location>
        <begin position="1"/>
        <end position="377"/>
    </location>
</feature>
<feature type="region of interest" description="Disordered" evidence="1">
    <location>
        <begin position="1"/>
        <end position="43"/>
    </location>
</feature>
<feature type="region of interest" description="Disordered" evidence="1">
    <location>
        <begin position="109"/>
        <end position="141"/>
    </location>
</feature>
<feature type="region of interest" description="Disordered" evidence="1">
    <location>
        <begin position="328"/>
        <end position="377"/>
    </location>
</feature>
<feature type="compositionally biased region" description="Polar residues" evidence="1">
    <location>
        <begin position="1"/>
        <end position="11"/>
    </location>
</feature>
<feature type="compositionally biased region" description="Polar residues" evidence="1">
    <location>
        <begin position="31"/>
        <end position="43"/>
    </location>
</feature>
<feature type="compositionally biased region" description="Basic and acidic residues" evidence="1">
    <location>
        <begin position="334"/>
        <end position="345"/>
    </location>
</feature>
<feature type="sequence variant" description="In strain: E/UW-5/Cx.">
    <original>Y</original>
    <variation>H</variation>
    <location>
        <position position="155"/>
    </location>
</feature>